<proteinExistence type="inferred from homology"/>
<accession>A5FUM6</accession>
<protein>
    <recommendedName>
        <fullName evidence="1">Pyrroloquinoline-quinone synthase</fullName>
        <ecNumber evidence="1">1.3.3.11</ecNumber>
    </recommendedName>
    <alternativeName>
        <fullName evidence="1">Coenzyme PQQ synthesis protein C</fullName>
    </alternativeName>
    <alternativeName>
        <fullName evidence="1">Pyrroloquinoline quinone biosynthesis protein C</fullName>
    </alternativeName>
</protein>
<name>PQQC_ACICJ</name>
<comment type="function">
    <text evidence="1">Ring cyclization and eight-electron oxidation of 3a-(2-amino-2-carboxyethyl)-4,5-dioxo-4,5,6,7,8,9-hexahydroquinoline-7,9-dicarboxylic-acid to PQQ.</text>
</comment>
<comment type="catalytic activity">
    <reaction evidence="1">
        <text>6-(2-amino-2-carboxyethyl)-7,8-dioxo-1,2,3,4,7,8-hexahydroquinoline-2,4-dicarboxylate + 3 O2 = pyrroloquinoline quinone + 2 H2O2 + 2 H2O + H(+)</text>
        <dbReference type="Rhea" id="RHEA:10692"/>
        <dbReference type="ChEBI" id="CHEBI:15377"/>
        <dbReference type="ChEBI" id="CHEBI:15378"/>
        <dbReference type="ChEBI" id="CHEBI:15379"/>
        <dbReference type="ChEBI" id="CHEBI:16240"/>
        <dbReference type="ChEBI" id="CHEBI:58442"/>
        <dbReference type="ChEBI" id="CHEBI:58778"/>
        <dbReference type="EC" id="1.3.3.11"/>
    </reaction>
</comment>
<comment type="pathway">
    <text evidence="1">Cofactor biosynthesis; pyrroloquinoline quinone biosynthesis.</text>
</comment>
<comment type="similarity">
    <text evidence="1">Belongs to the PqqC family.</text>
</comment>
<gene>
    <name evidence="1" type="primary">pqqC</name>
    <name type="ordered locus">Acry_0079</name>
</gene>
<sequence length="246" mass="27693">MTVLMSPDELEAALRAVGAARYHNRHPFHQLLHGGKLDKRQVQAWALNRYCYQAAIPIKDATLIARTDDSELRRIWRQRLVDHDGTQPGEGGIVRWLALAEGLGLDRDMVISERRALPATRFAVRAYVDFVRDRSLLEAVASSLTEMFSPTIISERVSGMLANYDFITRETLAYFNARLDQAPRDADFALDYVKRHARTPEQQQAAIAALTFKCDVLWAQLDALHHAYVSPGLIPPGAFGHDGIWS</sequence>
<evidence type="ECO:0000255" key="1">
    <source>
        <dbReference type="HAMAP-Rule" id="MF_00654"/>
    </source>
</evidence>
<feature type="chain" id="PRO_1000061666" description="Pyrroloquinoline-quinone synthase">
    <location>
        <begin position="1"/>
        <end position="246"/>
    </location>
</feature>
<organism>
    <name type="scientific">Acidiphilium cryptum (strain JF-5)</name>
    <dbReference type="NCBI Taxonomy" id="349163"/>
    <lineage>
        <taxon>Bacteria</taxon>
        <taxon>Pseudomonadati</taxon>
        <taxon>Pseudomonadota</taxon>
        <taxon>Alphaproteobacteria</taxon>
        <taxon>Acetobacterales</taxon>
        <taxon>Acidocellaceae</taxon>
        <taxon>Acidiphilium</taxon>
    </lineage>
</organism>
<keyword id="KW-0560">Oxidoreductase</keyword>
<keyword id="KW-0884">PQQ biosynthesis</keyword>
<keyword id="KW-1185">Reference proteome</keyword>
<reference key="1">
    <citation type="submission" date="2007-05" db="EMBL/GenBank/DDBJ databases">
        <title>Complete sequence of chromosome of Acidiphilium cryptum JF-5.</title>
        <authorList>
            <consortium name="US DOE Joint Genome Institute"/>
            <person name="Copeland A."/>
            <person name="Lucas S."/>
            <person name="Lapidus A."/>
            <person name="Barry K."/>
            <person name="Detter J.C."/>
            <person name="Glavina del Rio T."/>
            <person name="Hammon N."/>
            <person name="Israni S."/>
            <person name="Dalin E."/>
            <person name="Tice H."/>
            <person name="Pitluck S."/>
            <person name="Sims D."/>
            <person name="Brettin T."/>
            <person name="Bruce D."/>
            <person name="Han C."/>
            <person name="Schmutz J."/>
            <person name="Larimer F."/>
            <person name="Land M."/>
            <person name="Hauser L."/>
            <person name="Kyrpides N."/>
            <person name="Kim E."/>
            <person name="Magnuson T."/>
            <person name="Richardson P."/>
        </authorList>
    </citation>
    <scope>NUCLEOTIDE SEQUENCE [LARGE SCALE GENOMIC DNA]</scope>
    <source>
        <strain>JF-5</strain>
    </source>
</reference>
<dbReference type="EC" id="1.3.3.11" evidence="1"/>
<dbReference type="EMBL" id="CP000697">
    <property type="protein sequence ID" value="ABQ29308.1"/>
    <property type="molecule type" value="Genomic_DNA"/>
</dbReference>
<dbReference type="RefSeq" id="WP_007422717.1">
    <property type="nucleotide sequence ID" value="NC_009484.1"/>
</dbReference>
<dbReference type="SMR" id="A5FUM6"/>
<dbReference type="STRING" id="349163.Acry_0079"/>
<dbReference type="KEGG" id="acr:Acry_0079"/>
<dbReference type="eggNOG" id="COG5424">
    <property type="taxonomic scope" value="Bacteria"/>
</dbReference>
<dbReference type="HOGENOM" id="CLU_080136_0_0_5"/>
<dbReference type="UniPathway" id="UPA00539"/>
<dbReference type="Proteomes" id="UP000000245">
    <property type="component" value="Chromosome"/>
</dbReference>
<dbReference type="GO" id="GO:0033732">
    <property type="term" value="F:pyrroloquinoline-quinone synthase activity"/>
    <property type="evidence" value="ECO:0007669"/>
    <property type="project" value="UniProtKB-EC"/>
</dbReference>
<dbReference type="GO" id="GO:0018189">
    <property type="term" value="P:pyrroloquinoline quinone biosynthetic process"/>
    <property type="evidence" value="ECO:0007669"/>
    <property type="project" value="UniProtKB-UniRule"/>
</dbReference>
<dbReference type="GO" id="GO:0006790">
    <property type="term" value="P:sulfur compound metabolic process"/>
    <property type="evidence" value="ECO:0007669"/>
    <property type="project" value="UniProtKB-ARBA"/>
</dbReference>
<dbReference type="Gene3D" id="1.20.910.10">
    <property type="entry name" value="Heme oxygenase-like"/>
    <property type="match status" value="1"/>
</dbReference>
<dbReference type="HAMAP" id="MF_00654">
    <property type="entry name" value="PQQ_syn_PqqC"/>
    <property type="match status" value="1"/>
</dbReference>
<dbReference type="InterPro" id="IPR016084">
    <property type="entry name" value="Haem_Oase-like_multi-hlx"/>
</dbReference>
<dbReference type="InterPro" id="IPR011845">
    <property type="entry name" value="PqqC"/>
</dbReference>
<dbReference type="InterPro" id="IPR039068">
    <property type="entry name" value="PqqC-like"/>
</dbReference>
<dbReference type="InterPro" id="IPR004305">
    <property type="entry name" value="Thiaminase-2/PQQC"/>
</dbReference>
<dbReference type="NCBIfam" id="TIGR02111">
    <property type="entry name" value="PQQ_syn_pqqC"/>
    <property type="match status" value="1"/>
</dbReference>
<dbReference type="PANTHER" id="PTHR40279:SF3">
    <property type="entry name" value="4-AMINOBENZOATE SYNTHASE"/>
    <property type="match status" value="1"/>
</dbReference>
<dbReference type="PANTHER" id="PTHR40279">
    <property type="entry name" value="PQQC-LIKE PROTEIN"/>
    <property type="match status" value="1"/>
</dbReference>
<dbReference type="Pfam" id="PF03070">
    <property type="entry name" value="TENA_THI-4"/>
    <property type="match status" value="1"/>
</dbReference>
<dbReference type="SUPFAM" id="SSF48613">
    <property type="entry name" value="Heme oxygenase-like"/>
    <property type="match status" value="1"/>
</dbReference>